<name>GLPA_PANTR</name>
<reference key="1">
    <citation type="journal article" date="1995" name="J. Mol. Evol.">
        <title>Sequence diversification and exon inactivation in the glycophorin A gene family from chimpanzee to human.</title>
        <authorList>
            <person name="Huang C.-H."/>
            <person name="Xie S.S."/>
            <person name="Socha W."/>
            <person name="Blumenfeld O.O."/>
        </authorList>
    </citation>
    <scope>NUCLEOTIDE SEQUENCE [MRNA]</scope>
</reference>
<reference key="2">
    <citation type="submission" date="2001-02" db="EMBL/GenBank/DDBJ databases">
        <title>Molecular population genetic analysis of variation in Glycophorin A (GYPA).</title>
        <authorList>
            <person name="Baum J."/>
            <person name="Ward R.H."/>
            <person name="Conway D.J."/>
        </authorList>
    </citation>
    <scope>NUCLEOTIDE SEQUENCE [GENOMIC DNA] OF 14-144</scope>
</reference>
<accession>Q28913</accession>
<accession>Q8WMM7</accession>
<comment type="function">
    <text evidence="2">Component of the ankyrin-1 complex, a multiprotein complex involved in the stability and shape of the erythrocyte membrane. Glycophorin A is the major intrinsic membrane protein of the erythrocyte. The N-terminal glycosylated segment, which lies outside the erythrocyte membrane, has MN blood group receptors. Appears to be important for the function of SLC4A1 and is required for high activity of SLC4A1. May be involved in translocation of SLC4A1 to the plasma membrane.</text>
</comment>
<comment type="subunit">
    <text evidence="2">Homodimer. Component of the ankyrin-1 complex in the erythrocyte, composed of ANK1, RHCE, RHAG, SLC4A1, EPB42, GYPA, GYPB and AQP1. Interacts with SLC4A1; a GYPA monomer is bound at each end of the SLC4A1 dimer forming a heterotetramer.</text>
</comment>
<comment type="subcellular location">
    <subcellularLocation>
        <location>Cell membrane</location>
        <topology>Single-pass type I membrane protein</topology>
    </subcellularLocation>
</comment>
<comment type="similarity">
    <text evidence="4">Belongs to the glycophorin-A family.</text>
</comment>
<evidence type="ECO:0000250" key="1"/>
<evidence type="ECO:0000250" key="2">
    <source>
        <dbReference type="UniProtKB" id="P02724"/>
    </source>
</evidence>
<evidence type="ECO:0000256" key="3">
    <source>
        <dbReference type="SAM" id="MobiDB-lite"/>
    </source>
</evidence>
<evidence type="ECO:0000305" key="4"/>
<sequence length="149" mass="16404">MYGKIIFVLLLSAIVSISASSTTEVAMHTSTSSVTKSYISSETSDKHKWDTYPATPRAHEVSEIYVTTVYPPEEENGEGVQLVHRFSEPEITLIIFGVMAGVIGTILLIYYSIRRLIKKSPSDVKPLPSPDTDVPLSSVEIENPETSDQ</sequence>
<protein>
    <recommendedName>
        <fullName evidence="2">Glycophorin-A</fullName>
    </recommendedName>
    <cdAntigenName>CD235a</cdAntigenName>
</protein>
<keyword id="KW-1003">Cell membrane</keyword>
<keyword id="KW-0325">Glycoprotein</keyword>
<keyword id="KW-0472">Membrane</keyword>
<keyword id="KW-0597">Phosphoprotein</keyword>
<keyword id="KW-1185">Reference proteome</keyword>
<keyword id="KW-0730">Sialic acid</keyword>
<keyword id="KW-0732">Signal</keyword>
<keyword id="KW-0812">Transmembrane</keyword>
<keyword id="KW-1133">Transmembrane helix</keyword>
<feature type="signal peptide" evidence="1">
    <location>
        <begin position="1"/>
        <end position="19"/>
    </location>
</feature>
<feature type="chain" id="PRO_0000012135" description="Glycophorin-A">
    <location>
        <begin position="20"/>
        <end position="149"/>
    </location>
</feature>
<feature type="topological domain" description="Extracellular" evidence="1">
    <location>
        <begin position="20"/>
        <end position="90"/>
    </location>
</feature>
<feature type="transmembrane region" description="Helical" evidence="1">
    <location>
        <begin position="91"/>
        <end position="113"/>
    </location>
</feature>
<feature type="topological domain" description="Cytoplasmic" evidence="1">
    <location>
        <begin position="114"/>
        <end position="149"/>
    </location>
</feature>
<feature type="region of interest" description="Disordered" evidence="3">
    <location>
        <begin position="122"/>
        <end position="149"/>
    </location>
</feature>
<feature type="modified residue" description="Phosphoserine" evidence="2">
    <location>
        <position position="137"/>
    </location>
</feature>
<feature type="modified residue" description="Phosphoserine" evidence="2">
    <location>
        <position position="147"/>
    </location>
</feature>
<feature type="glycosylation site" description="O-linked (GalNAc...) serine" evidence="1">
    <location>
        <position position="21"/>
    </location>
</feature>
<feature type="glycosylation site" description="O-linked (GalNAc...) threonine" evidence="1">
    <location>
        <position position="22"/>
    </location>
</feature>
<feature type="glycosylation site" description="O-linked (GalNAc...) threonine" evidence="1">
    <location>
        <position position="23"/>
    </location>
</feature>
<feature type="glycosylation site" description="O-linked (GalNAc...) threonine" evidence="1">
    <location>
        <position position="29"/>
    </location>
</feature>
<feature type="glycosylation site" description="O-linked (GalNAc...) serine" evidence="1">
    <location>
        <position position="30"/>
    </location>
</feature>
<feature type="glycosylation site" description="O-linked (GalNAc...) threonine" evidence="1">
    <location>
        <position position="31"/>
    </location>
</feature>
<feature type="glycosylation site" description="O-linked (GalNAc...) serine" evidence="1">
    <location>
        <position position="32"/>
    </location>
</feature>
<feature type="glycosylation site" description="O-linked (GalNAc...) threonine" evidence="1">
    <location>
        <position position="35"/>
    </location>
</feature>
<feature type="glycosylation site" description="O-linked (GalNAc...) serine" evidence="1">
    <location>
        <position position="37"/>
    </location>
</feature>
<feature type="glycosylation site" description="O-linked (GalNAc...) serine" evidence="1">
    <location>
        <position position="40"/>
    </location>
</feature>
<feature type="glycosylation site" description="O-linked (GalNAc...) threonine" evidence="1">
    <location>
        <position position="43"/>
    </location>
</feature>
<feature type="glycosylation site" description="O-linked (GalNAc...) serine" evidence="1">
    <location>
        <position position="44"/>
    </location>
</feature>
<feature type="glycosylation site" description="O-linked (GalNAc...) threonine" evidence="1">
    <location>
        <position position="51"/>
    </location>
</feature>
<feature type="glycosylation site" description="O-linked (GalNAc...) threonine" evidence="1">
    <location>
        <position position="55"/>
    </location>
</feature>
<feature type="glycosylation site" description="O-linked (GalNAc...) serine" evidence="1">
    <location>
        <position position="62"/>
    </location>
</feature>
<feature type="glycosylation site" description="O-linked (GalNAc...) threonine" evidence="1">
    <location>
        <position position="68"/>
    </location>
</feature>
<feature type="sequence conflict" description="In Ref. 2; CAC83872." evidence="4" ref="2">
    <original>R</original>
    <variation>C</variation>
    <location>
        <position position="114"/>
    </location>
</feature>
<dbReference type="EMBL" id="S79724">
    <property type="protein sequence ID" value="AAB35338.1"/>
    <property type="molecule type" value="mRNA"/>
</dbReference>
<dbReference type="EMBL" id="AJ309708">
    <property type="protein sequence ID" value="CAC83872.1"/>
    <property type="molecule type" value="Genomic_DNA"/>
</dbReference>
<dbReference type="SMR" id="Q28913"/>
<dbReference type="FunCoup" id="Q28913">
    <property type="interactions" value="121"/>
</dbReference>
<dbReference type="STRING" id="9598.ENSPTRP00000028288"/>
<dbReference type="GlyCosmos" id="Q28913">
    <property type="glycosylation" value="16 sites, No reported glycans"/>
</dbReference>
<dbReference type="PaxDb" id="9598-ENSPTRP00000028288"/>
<dbReference type="eggNOG" id="ENOG502THAT">
    <property type="taxonomic scope" value="Eukaryota"/>
</dbReference>
<dbReference type="InParanoid" id="Q28913"/>
<dbReference type="Proteomes" id="UP000002277">
    <property type="component" value="Unplaced"/>
</dbReference>
<dbReference type="GO" id="GO:0170014">
    <property type="term" value="C:ankyrin-1 complex"/>
    <property type="evidence" value="ECO:0000250"/>
    <property type="project" value="UniProtKB"/>
</dbReference>
<dbReference type="GO" id="GO:0005886">
    <property type="term" value="C:plasma membrane"/>
    <property type="evidence" value="ECO:0000318"/>
    <property type="project" value="GO_Central"/>
</dbReference>
<dbReference type="FunFam" id="1.20.5.70:FF:000001">
    <property type="entry name" value="Glycophorin B"/>
    <property type="match status" value="1"/>
</dbReference>
<dbReference type="Gene3D" id="1.20.5.70">
    <property type="match status" value="1"/>
</dbReference>
<dbReference type="InterPro" id="IPR001195">
    <property type="entry name" value="Glycophorin"/>
</dbReference>
<dbReference type="InterPro" id="IPR018938">
    <property type="entry name" value="Glycophorin_CS"/>
</dbReference>
<dbReference type="InterPro" id="IPR049535">
    <property type="entry name" value="GYPA_B"/>
</dbReference>
<dbReference type="PANTHER" id="PTHR13813">
    <property type="entry name" value="GLYCOPHORIN"/>
    <property type="match status" value="1"/>
</dbReference>
<dbReference type="PANTHER" id="PTHR13813:SF3">
    <property type="entry name" value="GLYCOPHORIN-A"/>
    <property type="match status" value="1"/>
</dbReference>
<dbReference type="Pfam" id="PF01102">
    <property type="entry name" value="Glycophorin_A"/>
    <property type="match status" value="1"/>
</dbReference>
<dbReference type="PIRSF" id="PIRSF002466">
    <property type="entry name" value="Glycophorin"/>
    <property type="match status" value="1"/>
</dbReference>
<dbReference type="PROSITE" id="PS00312">
    <property type="entry name" value="GLYCOPHORIN_A"/>
    <property type="match status" value="1"/>
</dbReference>
<organism>
    <name type="scientific">Pan troglodytes</name>
    <name type="common">Chimpanzee</name>
    <dbReference type="NCBI Taxonomy" id="9598"/>
    <lineage>
        <taxon>Eukaryota</taxon>
        <taxon>Metazoa</taxon>
        <taxon>Chordata</taxon>
        <taxon>Craniata</taxon>
        <taxon>Vertebrata</taxon>
        <taxon>Euteleostomi</taxon>
        <taxon>Mammalia</taxon>
        <taxon>Eutheria</taxon>
        <taxon>Euarchontoglires</taxon>
        <taxon>Primates</taxon>
        <taxon>Haplorrhini</taxon>
        <taxon>Catarrhini</taxon>
        <taxon>Hominidae</taxon>
        <taxon>Pan</taxon>
    </lineage>
</organism>
<proteinExistence type="evidence at transcript level"/>
<gene>
    <name evidence="2" type="primary">GYPA</name>
    <name type="synonym">GPA</name>
</gene>